<accession>P16655</accession>
<protein>
    <recommendedName>
        <fullName evidence="1">Cell division protein DivIB</fullName>
    </recommendedName>
    <alternativeName>
        <fullName>Cell division and sporulation protein</fullName>
    </alternativeName>
    <alternativeName>
        <fullName>Division initiation protein DivIB</fullName>
    </alternativeName>
</protein>
<organism>
    <name type="scientific">Bacillus subtilis (strain 168)</name>
    <dbReference type="NCBI Taxonomy" id="224308"/>
    <lineage>
        <taxon>Bacteria</taxon>
        <taxon>Bacillati</taxon>
        <taxon>Bacillota</taxon>
        <taxon>Bacilli</taxon>
        <taxon>Bacillales</taxon>
        <taxon>Bacillaceae</taxon>
        <taxon>Bacillus</taxon>
    </lineage>
</organism>
<dbReference type="EMBL" id="M31800">
    <property type="protein sequence ID" value="AAA22393.1"/>
    <property type="molecule type" value="Genomic_DNA"/>
</dbReference>
<dbReference type="EMBL" id="M31827">
    <property type="protein sequence ID" value="AAA83970.1"/>
    <property type="molecule type" value="Genomic_DNA"/>
</dbReference>
<dbReference type="EMBL" id="AL009126">
    <property type="protein sequence ID" value="CAB13397.1"/>
    <property type="molecule type" value="Genomic_DNA"/>
</dbReference>
<dbReference type="PIR" id="B43727">
    <property type="entry name" value="B43727"/>
</dbReference>
<dbReference type="RefSeq" id="NP_389407.1">
    <property type="nucleotide sequence ID" value="NC_000964.3"/>
</dbReference>
<dbReference type="RefSeq" id="WP_003232178.1">
    <property type="nucleotide sequence ID" value="NZ_OZ025638.1"/>
</dbReference>
<dbReference type="FunCoup" id="P16655">
    <property type="interactions" value="7"/>
</dbReference>
<dbReference type="IntAct" id="P16655">
    <property type="interactions" value="12"/>
</dbReference>
<dbReference type="STRING" id="224308.BSU15240"/>
<dbReference type="jPOST" id="P16655"/>
<dbReference type="PaxDb" id="224308-BSU15240"/>
<dbReference type="EnsemblBacteria" id="CAB13397">
    <property type="protein sequence ID" value="CAB13397"/>
    <property type="gene ID" value="BSU_15240"/>
</dbReference>
<dbReference type="GeneID" id="939701"/>
<dbReference type="KEGG" id="bsu:BSU15240"/>
<dbReference type="PATRIC" id="fig|224308.179.peg.1662"/>
<dbReference type="eggNOG" id="COG1589">
    <property type="taxonomic scope" value="Bacteria"/>
</dbReference>
<dbReference type="InParanoid" id="P16655"/>
<dbReference type="OrthoDB" id="1819027at2"/>
<dbReference type="PhylomeDB" id="P16655"/>
<dbReference type="BioCyc" id="BSUB:BSU15240-MONOMER"/>
<dbReference type="Proteomes" id="UP000001570">
    <property type="component" value="Chromosome"/>
</dbReference>
<dbReference type="GO" id="GO:0032153">
    <property type="term" value="C:cell division site"/>
    <property type="evidence" value="ECO:0007669"/>
    <property type="project" value="UniProtKB-UniRule"/>
</dbReference>
<dbReference type="GO" id="GO:0005886">
    <property type="term" value="C:plasma membrane"/>
    <property type="evidence" value="ECO:0007669"/>
    <property type="project" value="UniProtKB-SubCell"/>
</dbReference>
<dbReference type="GO" id="GO:0043093">
    <property type="term" value="P:FtsZ-dependent cytokinesis"/>
    <property type="evidence" value="ECO:0007669"/>
    <property type="project" value="UniProtKB-UniRule"/>
</dbReference>
<dbReference type="GO" id="GO:0030435">
    <property type="term" value="P:sporulation resulting in formation of a cellular spore"/>
    <property type="evidence" value="ECO:0007669"/>
    <property type="project" value="UniProtKB-KW"/>
</dbReference>
<dbReference type="Gene3D" id="3.40.50.10960">
    <property type="match status" value="1"/>
</dbReference>
<dbReference type="Gene3D" id="3.10.20.310">
    <property type="entry name" value="membrane protein fhac"/>
    <property type="match status" value="1"/>
</dbReference>
<dbReference type="HAMAP" id="MF_00912">
    <property type="entry name" value="DivIB"/>
    <property type="match status" value="1"/>
</dbReference>
<dbReference type="InterPro" id="IPR005548">
    <property type="entry name" value="Cell_div_FtsQ/DivIB_C"/>
</dbReference>
<dbReference type="InterPro" id="IPR026580">
    <property type="entry name" value="DivIB"/>
</dbReference>
<dbReference type="InterPro" id="IPR050487">
    <property type="entry name" value="FtsQ_DivIB"/>
</dbReference>
<dbReference type="InterPro" id="IPR034746">
    <property type="entry name" value="POTRA"/>
</dbReference>
<dbReference type="InterPro" id="IPR013685">
    <property type="entry name" value="POTRA_FtsQ_type"/>
</dbReference>
<dbReference type="PANTHER" id="PTHR37820">
    <property type="entry name" value="CELL DIVISION PROTEIN DIVIB"/>
    <property type="match status" value="1"/>
</dbReference>
<dbReference type="PANTHER" id="PTHR37820:SF1">
    <property type="entry name" value="CELL DIVISION PROTEIN FTSQ"/>
    <property type="match status" value="1"/>
</dbReference>
<dbReference type="Pfam" id="PF03799">
    <property type="entry name" value="FtsQ_DivIB_C"/>
    <property type="match status" value="1"/>
</dbReference>
<dbReference type="Pfam" id="PF08478">
    <property type="entry name" value="POTRA_1"/>
    <property type="match status" value="1"/>
</dbReference>
<dbReference type="PROSITE" id="PS51779">
    <property type="entry name" value="POTRA"/>
    <property type="match status" value="1"/>
</dbReference>
<name>DIVIB_BACSU</name>
<proteinExistence type="evidence at protein level"/>
<sequence>MNPGQDREKIVNIEERIPKIKEQRKQKANRRLISFIMLFFIMVLIIVYLQTPISKVSTISVTGNENVSKKEIIDLSDINSGDTEFWSLDKQKTEKKIQQNKLVKKAEISKSLPNKINIAIEEYKAIAYLEKDDVYYEVLENGSVLPNEVTPDDAGPILVNWTNAKKRSQMAKQLDALSNSLKQSISEIYYTPVKMDENRIKLYMNDGYVVTASIKTFADRMKTYPSIISQLSSNKKGIIHLEVATYFEEFGKNDKAAKKEDEN</sequence>
<gene>
    <name evidence="1" type="primary">divIB</name>
    <name type="synonym">dds</name>
    <name type="ordered locus">BSU15240</name>
</gene>
<comment type="function">
    <text evidence="1 3 5 6 7 9">Cell division protein that may be involved in stabilizing or promoting the assembly of the division complex. Plays an essential role in division at high temperatures, maybe by protecting FtsL from degradation or by promoting formation of the FtsL-DivIC complex. May modulate the transpeptidase activity of PBP-2B. Also required for efficient sporulation at all temperatures. Could be directly involved in the engulfment process or be required to form a sporulation septum competent for engulfment. Influences the Spo0J/Soj system of chromosome segregation.</text>
</comment>
<comment type="subunit">
    <text evidence="6 9">Interacts with FtsL, DivIC and PBP-2B.</text>
</comment>
<comment type="interaction">
    <interactant intactId="EBI-5243256">
        <id>P16655</id>
    </interactant>
    <interactant intactId="EBI-5243272">
        <id>Q07868</id>
        <label>pbpB</label>
    </interactant>
    <organismsDiffer>false</organismsDiffer>
    <experiments>3</experiments>
</comment>
<comment type="subcellular location">
    <subcellularLocation>
        <location evidence="1 4 8">Cell membrane</location>
        <topology evidence="1 4 8">Single-pass type II membrane protein</topology>
    </subcellularLocation>
    <text>Localizes to the division septum. Localization requires FtsZ and DivIC. Localization of DivIB and DivIC is codependent at high temperatures.</text>
</comment>
<comment type="domain">
    <text evidence="8 9">The extracellular region contains three distinct subdomains: a membrane proximal alpha domain, a central beta domain and an unstructured C-terminal gamma domain. The C-terminal region of the beta domain is critical for interaction with PBP-2B. Contains multiple septal localization epitopes that are located within the transmembrane region and within the extracellular region. These epitopes may represent sites of interaction with other divisomal proteins.</text>
</comment>
<comment type="disruption phenotype">
    <text evidence="7">Mutants show a drastic decrease in sporulation efficiency. Polar septation is delayed and less efficient, and the completed septa are thicker than those of the wild type. Mutants are also unable to undergo engulfment.</text>
</comment>
<comment type="similarity">
    <text evidence="1">Belongs to the FtsQ/DivIB family. DivIB subfamily.</text>
</comment>
<evidence type="ECO:0000255" key="1">
    <source>
        <dbReference type="HAMAP-Rule" id="MF_00912"/>
    </source>
</evidence>
<evidence type="ECO:0000255" key="2">
    <source>
        <dbReference type="PROSITE-ProRule" id="PRU01115"/>
    </source>
</evidence>
<evidence type="ECO:0000269" key="3">
    <source>
    </source>
</evidence>
<evidence type="ECO:0000269" key="4">
    <source>
    </source>
</evidence>
<evidence type="ECO:0000269" key="5">
    <source>
    </source>
</evidence>
<evidence type="ECO:0000269" key="6">
    <source>
    </source>
</evidence>
<evidence type="ECO:0000269" key="7">
    <source>
    </source>
</evidence>
<evidence type="ECO:0000269" key="8">
    <source>
    </source>
</evidence>
<evidence type="ECO:0000269" key="9">
    <source>
    </source>
</evidence>
<feature type="chain" id="PRO_0000079921" description="Cell division protein DivIB">
    <location>
        <begin position="1"/>
        <end position="263"/>
    </location>
</feature>
<feature type="topological domain" description="Cytoplasmic" evidence="1">
    <location>
        <begin position="1"/>
        <end position="32"/>
    </location>
</feature>
<feature type="transmembrane region" description="Helical" evidence="1">
    <location>
        <begin position="33"/>
        <end position="53"/>
    </location>
</feature>
<feature type="topological domain" description="Extracellular" evidence="1">
    <location>
        <begin position="54"/>
        <end position="263"/>
    </location>
</feature>
<feature type="domain" description="POTRA" evidence="2">
    <location>
        <begin position="54"/>
        <end position="123"/>
    </location>
</feature>
<feature type="region of interest" description="Alpha">
    <location>
        <begin position="51"/>
        <end position="123"/>
    </location>
</feature>
<feature type="region of interest" description="Beta">
    <location>
        <begin position="124"/>
        <end position="251"/>
    </location>
</feature>
<feature type="region of interest" description="Gamma">
    <location>
        <begin position="229"/>
        <end position="263"/>
    </location>
</feature>
<feature type="mutagenesis site" description="Does not affect septal localization; when associated with R-41 and R-44." evidence="8">
    <original>M</original>
    <variation>R</variation>
    <location>
        <position position="37"/>
    </location>
</feature>
<feature type="mutagenesis site" description="Does not affect septal localization; when associated with R-37 and R-44." evidence="8">
    <original>I</original>
    <variation>R</variation>
    <location>
        <position position="41"/>
    </location>
</feature>
<feature type="mutagenesis site" description="Does not affect septal localization; when associated with R-37 and R-41." evidence="8">
    <original>L</original>
    <variation>R</variation>
    <location>
        <position position="44"/>
    </location>
</feature>
<feature type="mutagenesis site" description="Does not affect septal localization." evidence="8">
    <original>I</original>
    <variation>P</variation>
    <location>
        <position position="59"/>
    </location>
</feature>
<feature type="mutagenesis site" description="Does not affect septal localization and growth." evidence="8 9">
    <original>E</original>
    <variation>A</variation>
    <location>
        <position position="122"/>
    </location>
</feature>
<feature type="mutagenesis site" description="Does not affect growth." evidence="9">
    <original>L</original>
    <variation>A</variation>
    <location>
        <position position="139"/>
    </location>
</feature>
<feature type="mutagenesis site" description="Does not affect growth." evidence="9">
    <original>E</original>
    <variation>A</variation>
    <location>
        <position position="140"/>
    </location>
</feature>
<feature type="mutagenesis site" description="Does not affect growth." evidence="9">
    <original>N</original>
    <variation>A</variation>
    <location>
        <position position="141"/>
    </location>
</feature>
<feature type="mutagenesis site" description="Does not affect growth." evidence="9">
    <original>S</original>
    <variation>A</variation>
    <location>
        <position position="186"/>
    </location>
</feature>
<feature type="mutagenesis site" description="Does not affect growth." evidence="9">
    <original>E</original>
    <variation>A</variation>
    <location>
        <position position="187"/>
    </location>
</feature>
<feature type="mutagenesis site" description="Does not affect septal localization and growth." evidence="8 9">
    <original>P</original>
    <variation>A</variation>
    <location>
        <position position="192"/>
    </location>
</feature>
<feature type="mutagenesis site" description="Does not affect growth." evidence="9">
    <original>Y</original>
    <variation>A</variation>
    <location>
        <position position="203"/>
    </location>
</feature>
<feature type="mutagenesis site" description="Does not affect growth." evidence="9">
    <original>N</original>
    <variation>A</variation>
    <location>
        <position position="205"/>
    </location>
</feature>
<feature type="mutagenesis site" description="Does not affect growth." evidence="9">
    <original>D</original>
    <variation>A</variation>
    <location>
        <position position="206"/>
    </location>
</feature>
<feature type="mutagenesis site" description="Does not affect septal localization." evidence="8">
    <original>Y</original>
    <variation>A</variation>
    <location>
        <position position="208"/>
    </location>
</feature>
<feature type="mutagenesis site" description="Does not affect septal localization." evidence="8">
    <original>P</original>
    <variation>A</variation>
    <location>
        <position position="225"/>
    </location>
</feature>
<feature type="mutagenesis site" description="Impairs cell growth." evidence="9">
    <original>Y</original>
    <variation>A</variation>
    <location>
        <position position="246"/>
    </location>
</feature>
<reference key="1">
    <citation type="journal article" date="1989" name="J. Bacteriol.">
        <title>Cloning and expression of a Bacillus subtilis division initiation gene for which a homolog has not been identified in another organism.</title>
        <authorList>
            <person name="Harry E.J."/>
            <person name="Wake R.G."/>
        </authorList>
    </citation>
    <scope>NUCLEOTIDE SEQUENCE [GENOMIC DNA]</scope>
    <source>
        <strain>168</strain>
    </source>
</reference>
<reference key="2">
    <citation type="journal article" date="1989" name="J. Bacteriol.">
        <title>Nucleotide sequence and insertional inactivation of a Bacillus subtilis gene that affects cell division, sporulation, and temperature sensitivity.</title>
        <authorList>
            <person name="Beall B."/>
            <person name="Lutkenhaus J."/>
        </authorList>
    </citation>
    <scope>NUCLEOTIDE SEQUENCE [GENOMIC DNA]</scope>
</reference>
<reference key="3">
    <citation type="journal article" date="1997" name="Nature">
        <title>The complete genome sequence of the Gram-positive bacterium Bacillus subtilis.</title>
        <authorList>
            <person name="Kunst F."/>
            <person name="Ogasawara N."/>
            <person name="Moszer I."/>
            <person name="Albertini A.M."/>
            <person name="Alloni G."/>
            <person name="Azevedo V."/>
            <person name="Bertero M.G."/>
            <person name="Bessieres P."/>
            <person name="Bolotin A."/>
            <person name="Borchert S."/>
            <person name="Borriss R."/>
            <person name="Boursier L."/>
            <person name="Brans A."/>
            <person name="Braun M."/>
            <person name="Brignell S.C."/>
            <person name="Bron S."/>
            <person name="Brouillet S."/>
            <person name="Bruschi C.V."/>
            <person name="Caldwell B."/>
            <person name="Capuano V."/>
            <person name="Carter N.M."/>
            <person name="Choi S.-K."/>
            <person name="Codani J.-J."/>
            <person name="Connerton I.F."/>
            <person name="Cummings N.J."/>
            <person name="Daniel R.A."/>
            <person name="Denizot F."/>
            <person name="Devine K.M."/>
            <person name="Duesterhoeft A."/>
            <person name="Ehrlich S.D."/>
            <person name="Emmerson P.T."/>
            <person name="Entian K.-D."/>
            <person name="Errington J."/>
            <person name="Fabret C."/>
            <person name="Ferrari E."/>
            <person name="Foulger D."/>
            <person name="Fritz C."/>
            <person name="Fujita M."/>
            <person name="Fujita Y."/>
            <person name="Fuma S."/>
            <person name="Galizzi A."/>
            <person name="Galleron N."/>
            <person name="Ghim S.-Y."/>
            <person name="Glaser P."/>
            <person name="Goffeau A."/>
            <person name="Golightly E.J."/>
            <person name="Grandi G."/>
            <person name="Guiseppi G."/>
            <person name="Guy B.J."/>
            <person name="Haga K."/>
            <person name="Haiech J."/>
            <person name="Harwood C.R."/>
            <person name="Henaut A."/>
            <person name="Hilbert H."/>
            <person name="Holsappel S."/>
            <person name="Hosono S."/>
            <person name="Hullo M.-F."/>
            <person name="Itaya M."/>
            <person name="Jones L.-M."/>
            <person name="Joris B."/>
            <person name="Karamata D."/>
            <person name="Kasahara Y."/>
            <person name="Klaerr-Blanchard M."/>
            <person name="Klein C."/>
            <person name="Kobayashi Y."/>
            <person name="Koetter P."/>
            <person name="Koningstein G."/>
            <person name="Krogh S."/>
            <person name="Kumano M."/>
            <person name="Kurita K."/>
            <person name="Lapidus A."/>
            <person name="Lardinois S."/>
            <person name="Lauber J."/>
            <person name="Lazarevic V."/>
            <person name="Lee S.-M."/>
            <person name="Levine A."/>
            <person name="Liu H."/>
            <person name="Masuda S."/>
            <person name="Mauel C."/>
            <person name="Medigue C."/>
            <person name="Medina N."/>
            <person name="Mellado R.P."/>
            <person name="Mizuno M."/>
            <person name="Moestl D."/>
            <person name="Nakai S."/>
            <person name="Noback M."/>
            <person name="Noone D."/>
            <person name="O'Reilly M."/>
            <person name="Ogawa K."/>
            <person name="Ogiwara A."/>
            <person name="Oudega B."/>
            <person name="Park S.-H."/>
            <person name="Parro V."/>
            <person name="Pohl T.M."/>
            <person name="Portetelle D."/>
            <person name="Porwollik S."/>
            <person name="Prescott A.M."/>
            <person name="Presecan E."/>
            <person name="Pujic P."/>
            <person name="Purnelle B."/>
            <person name="Rapoport G."/>
            <person name="Rey M."/>
            <person name="Reynolds S."/>
            <person name="Rieger M."/>
            <person name="Rivolta C."/>
            <person name="Rocha E."/>
            <person name="Roche B."/>
            <person name="Rose M."/>
            <person name="Sadaie Y."/>
            <person name="Sato T."/>
            <person name="Scanlan E."/>
            <person name="Schleich S."/>
            <person name="Schroeter R."/>
            <person name="Scoffone F."/>
            <person name="Sekiguchi J."/>
            <person name="Sekowska A."/>
            <person name="Seror S.J."/>
            <person name="Serror P."/>
            <person name="Shin B.-S."/>
            <person name="Soldo B."/>
            <person name="Sorokin A."/>
            <person name="Tacconi E."/>
            <person name="Takagi T."/>
            <person name="Takahashi H."/>
            <person name="Takemaru K."/>
            <person name="Takeuchi M."/>
            <person name="Tamakoshi A."/>
            <person name="Tanaka T."/>
            <person name="Terpstra P."/>
            <person name="Tognoni A."/>
            <person name="Tosato V."/>
            <person name="Uchiyama S."/>
            <person name="Vandenbol M."/>
            <person name="Vannier F."/>
            <person name="Vassarotti A."/>
            <person name="Viari A."/>
            <person name="Wambutt R."/>
            <person name="Wedler E."/>
            <person name="Wedler H."/>
            <person name="Weitzenegger T."/>
            <person name="Winters P."/>
            <person name="Wipat A."/>
            <person name="Yamamoto H."/>
            <person name="Yamane K."/>
            <person name="Yasumoto K."/>
            <person name="Yata K."/>
            <person name="Yoshida K."/>
            <person name="Yoshikawa H.-F."/>
            <person name="Zumstein E."/>
            <person name="Yoshikawa H."/>
            <person name="Danchin A."/>
        </authorList>
    </citation>
    <scope>NUCLEOTIDE SEQUENCE [LARGE SCALE GENOMIC DNA]</scope>
    <source>
        <strain>168</strain>
    </source>
</reference>
<reference key="4">
    <citation type="journal article" date="2000" name="J. Bacteriol.">
        <title>Septal localization of the membrane-bound division proteins of Bacillus subtilis DivIB and DivIC is codependent only at high temperatures and requires FtsZ.</title>
        <authorList>
            <person name="Katis V.L."/>
            <person name="Wake R.G."/>
            <person name="Harry E.J."/>
        </authorList>
    </citation>
    <scope>SUBCELLULAR LOCATION</scope>
    <source>
        <strain>168</strain>
    </source>
</reference>
<reference key="5">
    <citation type="journal article" date="2000" name="Mol. Microbiol.">
        <title>Intrinsic instability of the essential cell division protein FtsL of Bacillus subtilis and a role for DivIB protein in FtsL turnover.</title>
        <authorList>
            <person name="Daniel R.A."/>
            <person name="Errington J."/>
        </authorList>
    </citation>
    <scope>FUNCTION</scope>
    <source>
        <strain>168</strain>
    </source>
</reference>
<reference key="6">
    <citation type="journal article" date="2005" name="Mol. Microbiol.">
        <title>Cell division protein DivIB influences the Spo0J/Soj system of chromosome segregation in Bacillus subtilis.</title>
        <authorList>
            <person name="Real G."/>
            <person name="Autret S."/>
            <person name="Harry E.J."/>
            <person name="Errington J."/>
            <person name="Henriques A.O."/>
        </authorList>
    </citation>
    <scope>FUNCTION IN SPORULATION</scope>
</reference>
<reference key="7">
    <citation type="journal article" date="2006" name="J. Bacteriol.">
        <title>Multiple interactions between the transmembrane division proteins of Bacillus subtilis and the role of FtsL instability in divisome assembly.</title>
        <authorList>
            <person name="Daniel R.A."/>
            <person name="Noirot-Gros M.F."/>
            <person name="Noirot P."/>
            <person name="Errington J."/>
        </authorList>
    </citation>
    <scope>FUNCTION</scope>
    <scope>INTERACTION WITH FTSL AND DIVIC</scope>
    <scope>SUBUNIT</scope>
    <source>
        <strain>168</strain>
    </source>
</reference>
<reference key="8">
    <citation type="journal article" date="2006" name="J. Bacteriol.">
        <title>Requirement for the cell division protein DivIB in polar cell division and engulfment during sporulation in Bacillus subtilis.</title>
        <authorList>
            <person name="Thompson L.S."/>
            <person name="Beech P.L."/>
            <person name="Real G."/>
            <person name="Henriques A.O."/>
            <person name="Harry E.J."/>
        </authorList>
    </citation>
    <scope>FUNCTION IN SPORULATION</scope>
    <scope>DISRUPTION PHENOTYPE</scope>
</reference>
<reference key="9">
    <citation type="journal article" date="2008" name="Mol. Microbiol.">
        <title>The divisomal protein DivIB contains multiple epitopes that mediate its recruitment to incipient division sites.</title>
        <authorList>
            <person name="Wadsworth K.D."/>
            <person name="Rowland S.L."/>
            <person name="Harry E.J."/>
            <person name="King G.F."/>
        </authorList>
    </citation>
    <scope>SUBCELLULAR LOCATION</scope>
    <scope>DOMAIN</scope>
    <scope>MUTAGENESIS OF MET-37; ILE-41; LEU-44; ILE-59; GLU-122; PRO-192; TYR-208 AND PRO-225</scope>
    <source>
        <strain>168</strain>
    </source>
</reference>
<reference key="10">
    <citation type="journal article" date="2010" name="J. Bacteriol.">
        <title>Evidence from artificial septal targeting and site-directed mutagenesis that residues in the extracytoplasmic beta domain of DivIB mediate its interaction with the divisomal transpeptidase PBP 2B.</title>
        <authorList>
            <person name="Rowland S.L."/>
            <person name="Wadsworth K.D."/>
            <person name="Robson S.A."/>
            <person name="Robichon C."/>
            <person name="Beckwith J."/>
            <person name="King G.F."/>
        </authorList>
    </citation>
    <scope>FUNCTION</scope>
    <scope>INTERACTION WITH PBP-2B</scope>
    <scope>DOMAIN</scope>
    <scope>MUTAGENESIS OF GLU-122; LEU-139; GLU-140; ASN-141; SER-186; GLU-187; PRO-192; TYR-203; ASN-205; ASP-206 AND TYR-246</scope>
    <source>
        <strain>168</strain>
    </source>
</reference>
<keyword id="KW-0131">Cell cycle</keyword>
<keyword id="KW-0132">Cell division</keyword>
<keyword id="KW-1003">Cell membrane</keyword>
<keyword id="KW-0472">Membrane</keyword>
<keyword id="KW-1185">Reference proteome</keyword>
<keyword id="KW-0749">Sporulation</keyword>
<keyword id="KW-0812">Transmembrane</keyword>
<keyword id="KW-1133">Transmembrane helix</keyword>